<reference key="1">
    <citation type="journal article" date="1995" name="Science">
        <title>Whole-genome random sequencing and assembly of Haemophilus influenzae Rd.</title>
        <authorList>
            <person name="Fleischmann R.D."/>
            <person name="Adams M.D."/>
            <person name="White O."/>
            <person name="Clayton R.A."/>
            <person name="Kirkness E.F."/>
            <person name="Kerlavage A.R."/>
            <person name="Bult C.J."/>
            <person name="Tomb J.-F."/>
            <person name="Dougherty B.A."/>
            <person name="Merrick J.M."/>
            <person name="McKenney K."/>
            <person name="Sutton G.G."/>
            <person name="FitzHugh W."/>
            <person name="Fields C.A."/>
            <person name="Gocayne J.D."/>
            <person name="Scott J.D."/>
            <person name="Shirley R."/>
            <person name="Liu L.-I."/>
            <person name="Glodek A."/>
            <person name="Kelley J.M."/>
            <person name="Weidman J.F."/>
            <person name="Phillips C.A."/>
            <person name="Spriggs T."/>
            <person name="Hedblom E."/>
            <person name="Cotton M.D."/>
            <person name="Utterback T.R."/>
            <person name="Hanna M.C."/>
            <person name="Nguyen D.T."/>
            <person name="Saudek D.M."/>
            <person name="Brandon R.C."/>
            <person name="Fine L.D."/>
            <person name="Fritchman J.L."/>
            <person name="Fuhrmann J.L."/>
            <person name="Geoghagen N.S.M."/>
            <person name="Gnehm C.L."/>
            <person name="McDonald L.A."/>
            <person name="Small K.V."/>
            <person name="Fraser C.M."/>
            <person name="Smith H.O."/>
            <person name="Venter J.C."/>
        </authorList>
    </citation>
    <scope>NUCLEOTIDE SEQUENCE [LARGE SCALE GENOMIC DNA]</scope>
    <source>
        <strain>ATCC 51907 / DSM 11121 / KW20 / Rd</strain>
    </source>
</reference>
<proteinExistence type="inferred from homology"/>
<comment type="function">
    <text evidence="1">May function as a DNA motor that moves dsDNA in an ATP-dependent manner towards the dif recombination site, which is located within the replication terminus region. Translocation stops specifically at Xer-dif sites, where FtsK interacts with the Xer recombinase, allowing activation of chromosome unlinking by recombination. FtsK orienting polar sequences (KOPS) guide the direction of DNA translocation. FtsK can remove proteins from DNA as it translocates, but translocation stops specifically at XerCD-dif site, thereby preventing removal of XerC and XerD from dif (By similarity).</text>
</comment>
<comment type="subunit">
    <text evidence="1">Homohexamer. Forms a ring that surrounds DNA (By similarity).</text>
</comment>
<comment type="miscellaneous">
    <text>Although strongly related to FtsK, it lacks the typical transmembrane domains located at the N-terminal part of FtsK.</text>
</comment>
<comment type="similarity">
    <text evidence="4">Belongs to the FtsK/SpoIIIE/SftA family.</text>
</comment>
<feature type="chain" id="PRO_0000098261" description="DNA translocase FtsK">
    <location>
        <begin position="1"/>
        <end position="529"/>
    </location>
</feature>
<feature type="domain" description="FtsK" evidence="2">
    <location>
        <begin position="174"/>
        <end position="387"/>
    </location>
</feature>
<feature type="region of interest" description="Disordered" evidence="3">
    <location>
        <begin position="1"/>
        <end position="20"/>
    </location>
</feature>
<feature type="region of interest" description="Disordered" evidence="3">
    <location>
        <begin position="509"/>
        <end position="529"/>
    </location>
</feature>
<feature type="compositionally biased region" description="Basic and acidic residues" evidence="3">
    <location>
        <begin position="518"/>
        <end position="529"/>
    </location>
</feature>
<feature type="binding site" evidence="2">
    <location>
        <begin position="194"/>
        <end position="199"/>
    </location>
    <ligand>
        <name>ATP</name>
        <dbReference type="ChEBI" id="CHEBI:30616"/>
    </ligand>
</feature>
<dbReference type="EMBL" id="L42023">
    <property type="protein sequence ID" value="AAC23240.1"/>
    <property type="molecule type" value="Genomic_DNA"/>
</dbReference>
<dbReference type="PIR" id="G64131">
    <property type="entry name" value="G64131"/>
</dbReference>
<dbReference type="SMR" id="P45264"/>
<dbReference type="STRING" id="71421.HI_1592"/>
<dbReference type="EnsemblBacteria" id="AAC23240">
    <property type="protein sequence ID" value="AAC23240"/>
    <property type="gene ID" value="HI_1592"/>
</dbReference>
<dbReference type="KEGG" id="hin:HI_1592"/>
<dbReference type="eggNOG" id="COG1674">
    <property type="taxonomic scope" value="Bacteria"/>
</dbReference>
<dbReference type="HOGENOM" id="CLU_001981_9_10_6"/>
<dbReference type="PhylomeDB" id="P45264"/>
<dbReference type="Proteomes" id="UP000000579">
    <property type="component" value="Chromosome"/>
</dbReference>
<dbReference type="GO" id="GO:0005524">
    <property type="term" value="F:ATP binding"/>
    <property type="evidence" value="ECO:0007669"/>
    <property type="project" value="UniProtKB-KW"/>
</dbReference>
<dbReference type="GO" id="GO:0003677">
    <property type="term" value="F:DNA binding"/>
    <property type="evidence" value="ECO:0007669"/>
    <property type="project" value="UniProtKB-KW"/>
</dbReference>
<dbReference type="GO" id="GO:0015616">
    <property type="term" value="F:DNA translocase activity"/>
    <property type="evidence" value="ECO:0000318"/>
    <property type="project" value="GO_Central"/>
</dbReference>
<dbReference type="GO" id="GO:0051301">
    <property type="term" value="P:cell division"/>
    <property type="evidence" value="ECO:0007669"/>
    <property type="project" value="UniProtKB-KW"/>
</dbReference>
<dbReference type="GO" id="GO:0007059">
    <property type="term" value="P:chromosome segregation"/>
    <property type="evidence" value="ECO:0007669"/>
    <property type="project" value="UniProtKB-KW"/>
</dbReference>
<dbReference type="CDD" id="cd01127">
    <property type="entry name" value="TrwB_TraG_TraD_VirD4"/>
    <property type="match status" value="1"/>
</dbReference>
<dbReference type="FunFam" id="3.40.50.300:FF:000209">
    <property type="entry name" value="Cell division protein FtsK"/>
    <property type="match status" value="1"/>
</dbReference>
<dbReference type="Gene3D" id="3.30.980.40">
    <property type="match status" value="1"/>
</dbReference>
<dbReference type="Gene3D" id="3.40.50.300">
    <property type="entry name" value="P-loop containing nucleotide triphosphate hydrolases"/>
    <property type="match status" value="1"/>
</dbReference>
<dbReference type="Gene3D" id="1.10.10.10">
    <property type="entry name" value="Winged helix-like DNA-binding domain superfamily/Winged helix DNA-binding domain"/>
    <property type="match status" value="1"/>
</dbReference>
<dbReference type="InterPro" id="IPR050206">
    <property type="entry name" value="FtsK/SpoIIIE/SftA"/>
</dbReference>
<dbReference type="InterPro" id="IPR041027">
    <property type="entry name" value="FtsK_alpha"/>
</dbReference>
<dbReference type="InterPro" id="IPR002543">
    <property type="entry name" value="FtsK_dom"/>
</dbReference>
<dbReference type="InterPro" id="IPR018541">
    <property type="entry name" value="Ftsk_gamma"/>
</dbReference>
<dbReference type="InterPro" id="IPR027417">
    <property type="entry name" value="P-loop_NTPase"/>
</dbReference>
<dbReference type="InterPro" id="IPR036388">
    <property type="entry name" value="WH-like_DNA-bd_sf"/>
</dbReference>
<dbReference type="InterPro" id="IPR036390">
    <property type="entry name" value="WH_DNA-bd_sf"/>
</dbReference>
<dbReference type="PANTHER" id="PTHR22683:SF41">
    <property type="entry name" value="DNA TRANSLOCASE FTSK"/>
    <property type="match status" value="1"/>
</dbReference>
<dbReference type="PANTHER" id="PTHR22683">
    <property type="entry name" value="SPORULATION PROTEIN RELATED"/>
    <property type="match status" value="1"/>
</dbReference>
<dbReference type="Pfam" id="PF17854">
    <property type="entry name" value="FtsK_alpha"/>
    <property type="match status" value="1"/>
</dbReference>
<dbReference type="Pfam" id="PF09397">
    <property type="entry name" value="FtsK_gamma"/>
    <property type="match status" value="1"/>
</dbReference>
<dbReference type="Pfam" id="PF01580">
    <property type="entry name" value="FtsK_SpoIIIE"/>
    <property type="match status" value="1"/>
</dbReference>
<dbReference type="SMART" id="SM00843">
    <property type="entry name" value="Ftsk_gamma"/>
    <property type="match status" value="1"/>
</dbReference>
<dbReference type="SUPFAM" id="SSF52540">
    <property type="entry name" value="P-loop containing nucleoside triphosphate hydrolases"/>
    <property type="match status" value="1"/>
</dbReference>
<dbReference type="SUPFAM" id="SSF46785">
    <property type="entry name" value="Winged helix' DNA-binding domain"/>
    <property type="match status" value="1"/>
</dbReference>
<dbReference type="PROSITE" id="PS50901">
    <property type="entry name" value="FTSK"/>
    <property type="match status" value="1"/>
</dbReference>
<sequence length="529" mass="58768">MEAVQLDKNQEPNYKGYSGSLIHPAFQQQTTKREKPSTPLPSLDLLLKYPPNEQRITPDEIMETSQRIEQQLRNFNVKASVKDVLVGPVVTRYELELQPGVKASKVTSIDTDLARALMFRSIRVAEVIPGKPYIGIETPNLHRQMVPLRDVLDSNEFRDSKATLPIALGKDISGKPVIVDLAKMPHLLVAGSTGSGKSVGVNTMILSLLYRVQPEDVKFIMIDPKVVELSVYNDIPHLLTPVVTDMKKAANALRWCVDEMERRYQLLSALRVRNIEGFNEKIDEYEAMGMPVPNPIWRLGDTMDAMPPALKKLSYIVVIVDEFADLMMVAGKQIEELIARLAQKARAIGIHLILATQRPSVDVITGLIKANIPSRIAFTVASKIDSRTILDQGGAEALLGRGDMLYSGQGSSDLIRVHGAYMSDDEVINIADDWRARGKPDYIDGILESADDEESSEKGISSGGELDPLFDEVMDFVINTGTTSVSSIQRKFSVGFNRAARIMDQMEEQGIVSPMQNGKREILSHRPEY</sequence>
<protein>
    <recommendedName>
        <fullName>DNA translocase FtsK</fullName>
    </recommendedName>
</protein>
<name>FTSK_HAEIN</name>
<evidence type="ECO:0000250" key="1"/>
<evidence type="ECO:0000255" key="2">
    <source>
        <dbReference type="PROSITE-ProRule" id="PRU00289"/>
    </source>
</evidence>
<evidence type="ECO:0000256" key="3">
    <source>
        <dbReference type="SAM" id="MobiDB-lite"/>
    </source>
</evidence>
<evidence type="ECO:0000305" key="4"/>
<keyword id="KW-0067">ATP-binding</keyword>
<keyword id="KW-0131">Cell cycle</keyword>
<keyword id="KW-0132">Cell division</keyword>
<keyword id="KW-0159">Chromosome partition</keyword>
<keyword id="KW-0238">DNA-binding</keyword>
<keyword id="KW-0547">Nucleotide-binding</keyword>
<keyword id="KW-1185">Reference proteome</keyword>
<organism>
    <name type="scientific">Haemophilus influenzae (strain ATCC 51907 / DSM 11121 / KW20 / Rd)</name>
    <dbReference type="NCBI Taxonomy" id="71421"/>
    <lineage>
        <taxon>Bacteria</taxon>
        <taxon>Pseudomonadati</taxon>
        <taxon>Pseudomonadota</taxon>
        <taxon>Gammaproteobacteria</taxon>
        <taxon>Pasteurellales</taxon>
        <taxon>Pasteurellaceae</taxon>
        <taxon>Haemophilus</taxon>
    </lineage>
</organism>
<gene>
    <name type="primary">ftsK</name>
    <name type="ordered locus">HI_1592</name>
</gene>
<accession>P45264</accession>